<keyword id="KW-0150">Chloroplast</keyword>
<keyword id="KW-0472">Membrane</keyword>
<keyword id="KW-0602">Photosynthesis</keyword>
<keyword id="KW-0934">Plastid</keyword>
<keyword id="KW-1185">Reference proteome</keyword>
<keyword id="KW-0677">Repeat</keyword>
<keyword id="KW-0793">Thylakoid</keyword>
<keyword id="KW-0802">TPR repeat</keyword>
<protein>
    <recommendedName>
        <fullName evidence="1">Photosystem I assembly protein Ycf3</fullName>
    </recommendedName>
</protein>
<reference key="1">
    <citation type="journal article" date="2003" name="DNA Res.">
        <title>Complete sequence and analysis of the plastid genome of the unicellular red alga Cyanidioschyzon merolae.</title>
        <authorList>
            <person name="Ohta N."/>
            <person name="Matsuzaki M."/>
            <person name="Misumi O."/>
            <person name="Miyagishima S.-Y."/>
            <person name="Nozaki H."/>
            <person name="Tanaka K."/>
            <person name="Shin-i T."/>
            <person name="Kohara Y."/>
            <person name="Kuroiwa T."/>
        </authorList>
    </citation>
    <scope>NUCLEOTIDE SEQUENCE [LARGE SCALE GENOMIC DNA]</scope>
    <source>
        <strain>NIES-3377 / 10D</strain>
    </source>
</reference>
<name>YCF3_CYAM1</name>
<evidence type="ECO:0000255" key="1">
    <source>
        <dbReference type="HAMAP-Rule" id="MF_00439"/>
    </source>
</evidence>
<sequence>MSRSQKNDNFIDKTFTILADVLVKLLPTSQNAKKAFSYYREGMAAQAEGEYAQALESYYHALEFEEDVIDRSYIIYNIGLIYASNGEDEQALEYYHQALELNPRLVQALNNIAVIYHKQGMTYQDEQLLQKAAAYWRKAIQLAPGQYLEAQNWLKNMV</sequence>
<comment type="function">
    <text evidence="1">Essential for the assembly of the photosystem I (PSI) complex. May act as a chaperone-like factor to guide the assembly of the PSI subunits.</text>
</comment>
<comment type="subcellular location">
    <subcellularLocation>
        <location evidence="1">Plastid</location>
        <location evidence="1">Chloroplast thylakoid membrane</location>
        <topology evidence="1">Peripheral membrane protein</topology>
    </subcellularLocation>
</comment>
<comment type="similarity">
    <text evidence="1">Belongs to the Ycf3 family.</text>
</comment>
<geneLocation type="chloroplast"/>
<accession>Q85FT1</accession>
<gene>
    <name evidence="1" type="primary">ycf3</name>
</gene>
<dbReference type="EMBL" id="AB002583">
    <property type="protein sequence ID" value="BAC76264.1"/>
    <property type="molecule type" value="Genomic_DNA"/>
</dbReference>
<dbReference type="RefSeq" id="NP_849102.1">
    <property type="nucleotide sequence ID" value="NC_004799.1"/>
</dbReference>
<dbReference type="SMR" id="Q85FT1"/>
<dbReference type="STRING" id="280699.Q85FT1"/>
<dbReference type="EnsemblPlants" id="CMV197CT">
    <property type="protein sequence ID" value="CMV197CT"/>
    <property type="gene ID" value="CMV197C"/>
</dbReference>
<dbReference type="GeneID" id="845074"/>
<dbReference type="Gramene" id="CMV197CT">
    <property type="protein sequence ID" value="CMV197CT"/>
    <property type="gene ID" value="CMV197C"/>
</dbReference>
<dbReference type="KEGG" id="cme:CymeCp170"/>
<dbReference type="eggNOG" id="KOG1124">
    <property type="taxonomic scope" value="Eukaryota"/>
</dbReference>
<dbReference type="HOGENOM" id="CLU_141248_0_0_1"/>
<dbReference type="Proteomes" id="UP000007014">
    <property type="component" value="Chloroplast"/>
</dbReference>
<dbReference type="GO" id="GO:0009535">
    <property type="term" value="C:chloroplast thylakoid membrane"/>
    <property type="evidence" value="ECO:0007669"/>
    <property type="project" value="UniProtKB-SubCell"/>
</dbReference>
<dbReference type="GO" id="GO:0015979">
    <property type="term" value="P:photosynthesis"/>
    <property type="evidence" value="ECO:0007669"/>
    <property type="project" value="UniProtKB-UniRule"/>
</dbReference>
<dbReference type="Gene3D" id="1.25.40.10">
    <property type="entry name" value="Tetratricopeptide repeat domain"/>
    <property type="match status" value="1"/>
</dbReference>
<dbReference type="HAMAP" id="MF_00439">
    <property type="entry name" value="Ycf3"/>
    <property type="match status" value="1"/>
</dbReference>
<dbReference type="InterPro" id="IPR022818">
    <property type="entry name" value="PSI_Ycf3_assembly"/>
</dbReference>
<dbReference type="InterPro" id="IPR011990">
    <property type="entry name" value="TPR-like_helical_dom_sf"/>
</dbReference>
<dbReference type="InterPro" id="IPR019734">
    <property type="entry name" value="TPR_rpt"/>
</dbReference>
<dbReference type="InterPro" id="IPR051685">
    <property type="entry name" value="Ycf3/AcsC/BcsC/TPR_MFPF"/>
</dbReference>
<dbReference type="NCBIfam" id="NF002725">
    <property type="entry name" value="PRK02603.1"/>
    <property type="match status" value="1"/>
</dbReference>
<dbReference type="PANTHER" id="PTHR44943">
    <property type="entry name" value="CELLULOSE SYNTHASE OPERON PROTEIN C"/>
    <property type="match status" value="1"/>
</dbReference>
<dbReference type="PANTHER" id="PTHR44943:SF9">
    <property type="entry name" value="TPR-REPEAT-CONTAINING PROTEIN"/>
    <property type="match status" value="1"/>
</dbReference>
<dbReference type="Pfam" id="PF13414">
    <property type="entry name" value="TPR_11"/>
    <property type="match status" value="1"/>
</dbReference>
<dbReference type="Pfam" id="PF13181">
    <property type="entry name" value="TPR_8"/>
    <property type="match status" value="1"/>
</dbReference>
<dbReference type="SMART" id="SM00028">
    <property type="entry name" value="TPR"/>
    <property type="match status" value="3"/>
</dbReference>
<dbReference type="SUPFAM" id="SSF48452">
    <property type="entry name" value="TPR-like"/>
    <property type="match status" value="1"/>
</dbReference>
<dbReference type="PROSITE" id="PS50005">
    <property type="entry name" value="TPR"/>
    <property type="match status" value="3"/>
</dbReference>
<dbReference type="PROSITE" id="PS50293">
    <property type="entry name" value="TPR_REGION"/>
    <property type="match status" value="1"/>
</dbReference>
<feature type="chain" id="PRO_0000217800" description="Photosystem I assembly protein Ycf3">
    <location>
        <begin position="1"/>
        <end position="158"/>
    </location>
</feature>
<feature type="repeat" description="TPR 1">
    <location>
        <begin position="35"/>
        <end position="68"/>
    </location>
</feature>
<feature type="repeat" description="TPR 2">
    <location>
        <begin position="72"/>
        <end position="105"/>
    </location>
</feature>
<feature type="repeat" description="TPR 3">
    <location>
        <begin position="113"/>
        <end position="146"/>
    </location>
</feature>
<organism>
    <name type="scientific">Cyanidioschyzon merolae (strain NIES-3377 / 10D)</name>
    <name type="common">Unicellular red alga</name>
    <dbReference type="NCBI Taxonomy" id="280699"/>
    <lineage>
        <taxon>Eukaryota</taxon>
        <taxon>Rhodophyta</taxon>
        <taxon>Bangiophyceae</taxon>
        <taxon>Cyanidiales</taxon>
        <taxon>Cyanidiaceae</taxon>
        <taxon>Cyanidioschyzon</taxon>
    </lineage>
</organism>
<proteinExistence type="inferred from homology"/>